<keyword id="KW-0067">ATP-binding</keyword>
<keyword id="KW-0997">Cell inner membrane</keyword>
<keyword id="KW-1003">Cell membrane</keyword>
<keyword id="KW-0472">Membrane</keyword>
<keyword id="KW-0547">Nucleotide-binding</keyword>
<keyword id="KW-1185">Reference proteome</keyword>
<keyword id="KW-0677">Repeat</keyword>
<keyword id="KW-0762">Sugar transport</keyword>
<keyword id="KW-1278">Translocase</keyword>
<keyword id="KW-0813">Transport</keyword>
<sequence>MNSTPVLEMRNIAKAFGKFYALKGVDLTVYPGEIHALMGENGAGKSTLMKVLAGAYTATSGEILIDGKPFHIRTPKDALSAGITLIYQEMQLAPNLSVAENIFLGSELSHGGLVQRKEMLVQAQKVIDRLGAQFNASDKVMTLTIAEQQQVEIARALHRNSRILVMDEPTAALSSRETHRLFELIMRLRDEGMAIIYISHRMAEVYELSDRVSVLRDGQYVGSLTRDNLNAGELVRMMVGRPLSDLFNKERDIPLGKARLNVHHLTDGGKVQPSSLLVRSGEIVGLAGLVGAGRSELAQLIFGVRKATGGMIEVDGEPVVIHSPREAIDLGIGFLTENRKEQGLFLEMAAAENITMATLERDARWGMLNRKKAQTISDDAIKLLNIRVPHAQVRAGGLSGGNQQKLLISRWVAIGPRILLLDEPARGVDVGAKSEIYRIMNEMARKGVAILMISSELPEIVGMSDRVYVMREGSIAGELNGKNITQENIMTLATGVNDAHSQAVTS</sequence>
<reference key="1">
    <citation type="journal article" date="2001" name="Nature">
        <title>Genome sequence of enterohaemorrhagic Escherichia coli O157:H7.</title>
        <authorList>
            <person name="Perna N.T."/>
            <person name="Plunkett G. III"/>
            <person name="Burland V."/>
            <person name="Mau B."/>
            <person name="Glasner J.D."/>
            <person name="Rose D.J."/>
            <person name="Mayhew G.F."/>
            <person name="Evans P.S."/>
            <person name="Gregor J."/>
            <person name="Kirkpatrick H.A."/>
            <person name="Posfai G."/>
            <person name="Hackett J."/>
            <person name="Klink S."/>
            <person name="Boutin A."/>
            <person name="Shao Y."/>
            <person name="Miller L."/>
            <person name="Grotbeck E.J."/>
            <person name="Davis N.W."/>
            <person name="Lim A."/>
            <person name="Dimalanta E.T."/>
            <person name="Potamousis K."/>
            <person name="Apodaca J."/>
            <person name="Anantharaman T.S."/>
            <person name="Lin J."/>
            <person name="Yen G."/>
            <person name="Schwartz D.C."/>
            <person name="Welch R.A."/>
            <person name="Blattner F.R."/>
        </authorList>
    </citation>
    <scope>NUCLEOTIDE SEQUENCE [LARGE SCALE GENOMIC DNA]</scope>
    <source>
        <strain>O157:H7 / EDL933 / ATCC 700927 / EHEC</strain>
    </source>
</reference>
<reference key="2">
    <citation type="journal article" date="2001" name="DNA Res.">
        <title>Complete genome sequence of enterohemorrhagic Escherichia coli O157:H7 and genomic comparison with a laboratory strain K-12.</title>
        <authorList>
            <person name="Hayashi T."/>
            <person name="Makino K."/>
            <person name="Ohnishi M."/>
            <person name="Kurokawa K."/>
            <person name="Ishii K."/>
            <person name="Yokoyama K."/>
            <person name="Han C.-G."/>
            <person name="Ohtsubo E."/>
            <person name="Nakayama K."/>
            <person name="Murata T."/>
            <person name="Tanaka M."/>
            <person name="Tobe T."/>
            <person name="Iida T."/>
            <person name="Takami H."/>
            <person name="Honda T."/>
            <person name="Sasakawa C."/>
            <person name="Ogasawara N."/>
            <person name="Yasunaga T."/>
            <person name="Kuhara S."/>
            <person name="Shiba T."/>
            <person name="Hattori M."/>
            <person name="Shinagawa H."/>
        </authorList>
    </citation>
    <scope>NUCLEOTIDE SEQUENCE [LARGE SCALE GENOMIC DNA]</scope>
    <source>
        <strain>O157:H7 / Sakai / RIMD 0509952 / EHEC</strain>
    </source>
</reference>
<proteinExistence type="inferred from homology"/>
<organism>
    <name type="scientific">Escherichia coli O157:H7</name>
    <dbReference type="NCBI Taxonomy" id="83334"/>
    <lineage>
        <taxon>Bacteria</taxon>
        <taxon>Pseudomonadati</taxon>
        <taxon>Pseudomonadota</taxon>
        <taxon>Gammaproteobacteria</taxon>
        <taxon>Enterobacterales</taxon>
        <taxon>Enterobacteriaceae</taxon>
        <taxon>Escherichia</taxon>
    </lineage>
</organism>
<feature type="chain" id="PRO_0000261065" description="Ribose import ATP-binding protein RbsA 2">
    <location>
        <begin position="1"/>
        <end position="506"/>
    </location>
</feature>
<feature type="domain" description="ABC transporter 1" evidence="1">
    <location>
        <begin position="7"/>
        <end position="242"/>
    </location>
</feature>
<feature type="domain" description="ABC transporter 2" evidence="1">
    <location>
        <begin position="250"/>
        <end position="497"/>
    </location>
</feature>
<feature type="binding site" evidence="1">
    <location>
        <begin position="39"/>
        <end position="46"/>
    </location>
    <ligand>
        <name>ATP</name>
        <dbReference type="ChEBI" id="CHEBI:30616"/>
    </ligand>
</feature>
<gene>
    <name evidence="1" type="primary">rbsA2</name>
    <name type="ordered locus">Z5691</name>
    <name type="ordered locus">ECs5073</name>
</gene>
<accession>Q8X5Q4</accession>
<accession>Q7A905</accession>
<dbReference type="EC" id="7.5.2.7" evidence="1"/>
<dbReference type="EMBL" id="AE005174">
    <property type="protein sequence ID" value="AAG59288.1"/>
    <property type="status" value="ALT_INIT"/>
    <property type="molecule type" value="Genomic_DNA"/>
</dbReference>
<dbReference type="EMBL" id="BA000007">
    <property type="protein sequence ID" value="BAB38496.1"/>
    <property type="molecule type" value="Genomic_DNA"/>
</dbReference>
<dbReference type="PIR" id="A91263">
    <property type="entry name" value="A91263"/>
</dbReference>
<dbReference type="PIR" id="D86103">
    <property type="entry name" value="D86103"/>
</dbReference>
<dbReference type="RefSeq" id="NP_313100.1">
    <property type="nucleotide sequence ID" value="NC_002695.1"/>
</dbReference>
<dbReference type="RefSeq" id="WP_001089388.1">
    <property type="nucleotide sequence ID" value="NZ_SEKU01000001.1"/>
</dbReference>
<dbReference type="SMR" id="Q8X5Q4"/>
<dbReference type="STRING" id="155864.Z5691"/>
<dbReference type="KEGG" id="ece:Z5691"/>
<dbReference type="KEGG" id="ecs:ECs_5073"/>
<dbReference type="PATRIC" id="fig|386585.9.peg.5301"/>
<dbReference type="eggNOG" id="COG1129">
    <property type="taxonomic scope" value="Bacteria"/>
</dbReference>
<dbReference type="HOGENOM" id="CLU_000604_92_3_6"/>
<dbReference type="OMA" id="GKWLSHG"/>
<dbReference type="Proteomes" id="UP000000558">
    <property type="component" value="Chromosome"/>
</dbReference>
<dbReference type="Proteomes" id="UP000002519">
    <property type="component" value="Chromosome"/>
</dbReference>
<dbReference type="GO" id="GO:0005886">
    <property type="term" value="C:plasma membrane"/>
    <property type="evidence" value="ECO:0007669"/>
    <property type="project" value="UniProtKB-SubCell"/>
</dbReference>
<dbReference type="GO" id="GO:0015611">
    <property type="term" value="F:ABC-type D-ribose transporter activity"/>
    <property type="evidence" value="ECO:0007669"/>
    <property type="project" value="UniProtKB-EC"/>
</dbReference>
<dbReference type="GO" id="GO:0005524">
    <property type="term" value="F:ATP binding"/>
    <property type="evidence" value="ECO:0007669"/>
    <property type="project" value="UniProtKB-KW"/>
</dbReference>
<dbReference type="GO" id="GO:0016887">
    <property type="term" value="F:ATP hydrolysis activity"/>
    <property type="evidence" value="ECO:0007669"/>
    <property type="project" value="InterPro"/>
</dbReference>
<dbReference type="CDD" id="cd03216">
    <property type="entry name" value="ABC_Carb_Monos_I"/>
    <property type="match status" value="1"/>
</dbReference>
<dbReference type="CDD" id="cd03215">
    <property type="entry name" value="ABC_Carb_Monos_II"/>
    <property type="match status" value="1"/>
</dbReference>
<dbReference type="FunFam" id="3.40.50.300:FF:000127">
    <property type="entry name" value="Ribose import ATP-binding protein RbsA"/>
    <property type="match status" value="1"/>
</dbReference>
<dbReference type="Gene3D" id="3.40.50.300">
    <property type="entry name" value="P-loop containing nucleotide triphosphate hydrolases"/>
    <property type="match status" value="2"/>
</dbReference>
<dbReference type="InterPro" id="IPR003593">
    <property type="entry name" value="AAA+_ATPase"/>
</dbReference>
<dbReference type="InterPro" id="IPR050107">
    <property type="entry name" value="ABC_carbohydrate_import_ATPase"/>
</dbReference>
<dbReference type="InterPro" id="IPR003439">
    <property type="entry name" value="ABC_transporter-like_ATP-bd"/>
</dbReference>
<dbReference type="InterPro" id="IPR017871">
    <property type="entry name" value="ABC_transporter-like_CS"/>
</dbReference>
<dbReference type="InterPro" id="IPR027417">
    <property type="entry name" value="P-loop_NTPase"/>
</dbReference>
<dbReference type="PANTHER" id="PTHR43790">
    <property type="entry name" value="CARBOHYDRATE TRANSPORT ATP-BINDING PROTEIN MG119-RELATED"/>
    <property type="match status" value="1"/>
</dbReference>
<dbReference type="PANTHER" id="PTHR43790:SF3">
    <property type="entry name" value="D-ALLOSE IMPORT ATP-BINDING PROTEIN ALSA-RELATED"/>
    <property type="match status" value="1"/>
</dbReference>
<dbReference type="Pfam" id="PF00005">
    <property type="entry name" value="ABC_tran"/>
    <property type="match status" value="2"/>
</dbReference>
<dbReference type="SMART" id="SM00382">
    <property type="entry name" value="AAA"/>
    <property type="match status" value="2"/>
</dbReference>
<dbReference type="SUPFAM" id="SSF52540">
    <property type="entry name" value="P-loop containing nucleoside triphosphate hydrolases"/>
    <property type="match status" value="2"/>
</dbReference>
<dbReference type="PROSITE" id="PS00211">
    <property type="entry name" value="ABC_TRANSPORTER_1"/>
    <property type="match status" value="1"/>
</dbReference>
<dbReference type="PROSITE" id="PS50893">
    <property type="entry name" value="ABC_TRANSPORTER_2"/>
    <property type="match status" value="2"/>
</dbReference>
<dbReference type="PROSITE" id="PS51254">
    <property type="entry name" value="RBSA"/>
    <property type="match status" value="1"/>
</dbReference>
<name>RBSA2_ECO57</name>
<evidence type="ECO:0000255" key="1">
    <source>
        <dbReference type="HAMAP-Rule" id="MF_01716"/>
    </source>
</evidence>
<evidence type="ECO:0000305" key="2"/>
<protein>
    <recommendedName>
        <fullName evidence="1">Ribose import ATP-binding protein RbsA 2</fullName>
        <ecNumber evidence="1">7.5.2.7</ecNumber>
    </recommendedName>
</protein>
<comment type="function">
    <text evidence="1">Part of the ABC transporter complex RbsABC involved in ribose import. Responsible for energy coupling to the transport system.</text>
</comment>
<comment type="catalytic activity">
    <reaction evidence="1">
        <text>D-ribose(out) + ATP + H2O = D-ribose(in) + ADP + phosphate + H(+)</text>
        <dbReference type="Rhea" id="RHEA:29903"/>
        <dbReference type="ChEBI" id="CHEBI:15377"/>
        <dbReference type="ChEBI" id="CHEBI:15378"/>
        <dbReference type="ChEBI" id="CHEBI:30616"/>
        <dbReference type="ChEBI" id="CHEBI:43474"/>
        <dbReference type="ChEBI" id="CHEBI:47013"/>
        <dbReference type="ChEBI" id="CHEBI:456216"/>
        <dbReference type="EC" id="7.5.2.7"/>
    </reaction>
</comment>
<comment type="subunit">
    <text evidence="1">The complex is composed of an ATP-binding protein (RbsA), two transmembrane proteins (RbsC) and a solute-binding protein (RbsB).</text>
</comment>
<comment type="subcellular location">
    <subcellularLocation>
        <location evidence="1">Cell inner membrane</location>
        <topology evidence="1">Peripheral membrane protein</topology>
    </subcellularLocation>
</comment>
<comment type="similarity">
    <text evidence="1">Belongs to the ABC transporter superfamily. Ribose importer (TC 3.A.1.2.1) family.</text>
</comment>
<comment type="sequence caution" evidence="2">
    <conflict type="erroneous initiation">
        <sequence resource="EMBL-CDS" id="AAG59288"/>
    </conflict>
</comment>